<sequence length="360" mass="40437">MNAPLAGIWPWLPLLLTWLAPEVSSSWWYMRATGGSSRVMCDNVPGLVSRQRQLCHRHPDVMRAIGLGVAEWTAECQHQFRQHRWNCNTLDRDHSLFGRVLLRSSRESAFVYAISSAGVVFAITRACSQGELKSCSCDPKKKGTAKDSKGTFDWGGCSDNIDYGIRFARAFVDAKERKGKDARALMNLHNNRAGRKAVKRFLKQECKCHGVSGSCTLRTCWLAMADFRKTGDYLWRKYNGAIQVVMNQDGTGFTVANKRFKKPTKNDLVYFENSPDYCIRDRDAGSPGTAGRVCNLTSRGMDSCEVMCCGRGYDTSRITRMTKCECKFHWCCAVRCQDCLEALDVHTCKAPKSADWAAPT</sequence>
<feature type="signal peptide" evidence="5">
    <location>
        <begin position="1"/>
        <end position="25"/>
    </location>
</feature>
<feature type="chain" id="PRO_0000250463" description="Protein Wnt-2">
    <location>
        <begin position="26"/>
        <end position="360"/>
    </location>
</feature>
<feature type="lipid moiety-binding region" description="O-palmitoleoyl serine; by PORCN" evidence="4">
    <location>
        <position position="212"/>
    </location>
</feature>
<feature type="glycosylation site" description="N-linked (GlcNAc...) asparagine" evidence="5">
    <location>
        <position position="295"/>
    </location>
</feature>
<feature type="disulfide bond" evidence="3">
    <location>
        <begin position="76"/>
        <end position="87"/>
    </location>
</feature>
<feature type="disulfide bond" evidence="3">
    <location>
        <begin position="127"/>
        <end position="135"/>
    </location>
</feature>
<feature type="disulfide bond" evidence="3">
    <location>
        <begin position="137"/>
        <end position="157"/>
    </location>
</feature>
<feature type="disulfide bond" evidence="3">
    <location>
        <begin position="206"/>
        <end position="220"/>
    </location>
</feature>
<feature type="disulfide bond" evidence="3">
    <location>
        <begin position="208"/>
        <end position="215"/>
    </location>
</feature>
<feature type="disulfide bond" evidence="3">
    <location>
        <begin position="278"/>
        <end position="309"/>
    </location>
</feature>
<feature type="disulfide bond" evidence="3">
    <location>
        <begin position="294"/>
        <end position="304"/>
    </location>
</feature>
<feature type="disulfide bond" evidence="3">
    <location>
        <begin position="308"/>
        <end position="348"/>
    </location>
</feature>
<feature type="disulfide bond" evidence="3">
    <location>
        <begin position="324"/>
        <end position="339"/>
    </location>
</feature>
<feature type="disulfide bond" evidence="3">
    <location>
        <begin position="326"/>
        <end position="336"/>
    </location>
</feature>
<feature type="disulfide bond" evidence="3">
    <location>
        <begin position="331"/>
        <end position="332"/>
    </location>
</feature>
<proteinExistence type="inferred from homology"/>
<dbReference type="EMBL" id="DP000087">
    <property type="protein sequence ID" value="ABG66650.1"/>
    <property type="molecule type" value="Genomic_DNA"/>
</dbReference>
<dbReference type="RefSeq" id="XP_003407280.1">
    <property type="nucleotide sequence ID" value="XM_003407232.2"/>
</dbReference>
<dbReference type="SMR" id="Q108U2"/>
<dbReference type="FunCoup" id="Q108U2">
    <property type="interactions" value="1"/>
</dbReference>
<dbReference type="STRING" id="9785.ENSLAFP00000017329"/>
<dbReference type="GlyCosmos" id="Q108U2">
    <property type="glycosylation" value="1 site, No reported glycans"/>
</dbReference>
<dbReference type="Ensembl" id="ENSLAFT00000022959.2">
    <property type="protein sequence ID" value="ENSLAFP00000017329.2"/>
    <property type="gene ID" value="ENSLAFG00000022699.2"/>
</dbReference>
<dbReference type="KEGG" id="lav:100657046"/>
<dbReference type="eggNOG" id="KOG3913">
    <property type="taxonomic scope" value="Eukaryota"/>
</dbReference>
<dbReference type="GeneTree" id="ENSGT00940000159231"/>
<dbReference type="InParanoid" id="Q108U2"/>
<dbReference type="OMA" id="ITRMTKC"/>
<dbReference type="OrthoDB" id="5945655at2759"/>
<dbReference type="TreeFam" id="TF105310"/>
<dbReference type="Proteomes" id="UP000007646">
    <property type="component" value="Unassembled WGS sequence"/>
</dbReference>
<dbReference type="GO" id="GO:0005737">
    <property type="term" value="C:cytoplasm"/>
    <property type="evidence" value="ECO:0007669"/>
    <property type="project" value="Ensembl"/>
</dbReference>
<dbReference type="GO" id="GO:0005615">
    <property type="term" value="C:extracellular space"/>
    <property type="evidence" value="ECO:0007669"/>
    <property type="project" value="TreeGrafter"/>
</dbReference>
<dbReference type="GO" id="GO:0005125">
    <property type="term" value="F:cytokine activity"/>
    <property type="evidence" value="ECO:0007669"/>
    <property type="project" value="Ensembl"/>
</dbReference>
<dbReference type="GO" id="GO:0005109">
    <property type="term" value="F:frizzled binding"/>
    <property type="evidence" value="ECO:0007669"/>
    <property type="project" value="Ensembl"/>
</dbReference>
<dbReference type="GO" id="GO:0055009">
    <property type="term" value="P:atrial cardiac muscle tissue morphogenesis"/>
    <property type="evidence" value="ECO:0007669"/>
    <property type="project" value="Ensembl"/>
</dbReference>
<dbReference type="GO" id="GO:0060070">
    <property type="term" value="P:canonical Wnt signaling pathway"/>
    <property type="evidence" value="ECO:0007669"/>
    <property type="project" value="Ensembl"/>
</dbReference>
<dbReference type="GO" id="GO:0060317">
    <property type="term" value="P:cardiac epithelial to mesenchymal transition"/>
    <property type="evidence" value="ECO:0007669"/>
    <property type="project" value="Ensembl"/>
</dbReference>
<dbReference type="GO" id="GO:0060038">
    <property type="term" value="P:cardiac muscle cell proliferation"/>
    <property type="evidence" value="ECO:0007669"/>
    <property type="project" value="Ensembl"/>
</dbReference>
<dbReference type="GO" id="GO:0045165">
    <property type="term" value="P:cell fate commitment"/>
    <property type="evidence" value="ECO:0007669"/>
    <property type="project" value="TreeGrafter"/>
</dbReference>
<dbReference type="GO" id="GO:0033278">
    <property type="term" value="P:cell proliferation in midbrain"/>
    <property type="evidence" value="ECO:0007669"/>
    <property type="project" value="Ensembl"/>
</dbReference>
<dbReference type="GO" id="GO:0007267">
    <property type="term" value="P:cell-cell signaling"/>
    <property type="evidence" value="ECO:0007669"/>
    <property type="project" value="Ensembl"/>
</dbReference>
<dbReference type="GO" id="GO:0071560">
    <property type="term" value="P:cellular response to transforming growth factor beta stimulus"/>
    <property type="evidence" value="ECO:0007669"/>
    <property type="project" value="Ensembl"/>
</dbReference>
<dbReference type="GO" id="GO:0060502">
    <property type="term" value="P:epithelial cell proliferation involved in lung morphogenesis"/>
    <property type="evidence" value="ECO:0007669"/>
    <property type="project" value="Ensembl"/>
</dbReference>
<dbReference type="GO" id="GO:0060716">
    <property type="term" value="P:labyrinthine layer blood vessel development"/>
    <property type="evidence" value="ECO:0007669"/>
    <property type="project" value="Ensembl"/>
</dbReference>
<dbReference type="GO" id="GO:0060492">
    <property type="term" value="P:lung induction"/>
    <property type="evidence" value="ECO:0007669"/>
    <property type="project" value="Ensembl"/>
</dbReference>
<dbReference type="GO" id="GO:0061180">
    <property type="term" value="P:mammary gland epithelium development"/>
    <property type="evidence" value="ECO:0007669"/>
    <property type="project" value="Ensembl"/>
</dbReference>
<dbReference type="GO" id="GO:0010463">
    <property type="term" value="P:mesenchymal cell proliferation"/>
    <property type="evidence" value="ECO:0007669"/>
    <property type="project" value="Ensembl"/>
</dbReference>
<dbReference type="GO" id="GO:1904948">
    <property type="term" value="P:midbrain dopaminergic neuron differentiation"/>
    <property type="evidence" value="ECO:0007669"/>
    <property type="project" value="Ensembl"/>
</dbReference>
<dbReference type="GO" id="GO:0060045">
    <property type="term" value="P:positive regulation of cardiac muscle cell proliferation"/>
    <property type="evidence" value="ECO:0007669"/>
    <property type="project" value="Ensembl"/>
</dbReference>
<dbReference type="GO" id="GO:0060501">
    <property type="term" value="P:positive regulation of epithelial cell proliferation involved in lung morphogenesis"/>
    <property type="evidence" value="ECO:0007669"/>
    <property type="project" value="Ensembl"/>
</dbReference>
<dbReference type="GO" id="GO:0048146">
    <property type="term" value="P:positive regulation of fibroblast proliferation"/>
    <property type="evidence" value="ECO:0007669"/>
    <property type="project" value="Ensembl"/>
</dbReference>
<dbReference type="GO" id="GO:0002053">
    <property type="term" value="P:positive regulation of mesenchymal cell proliferation"/>
    <property type="evidence" value="ECO:0007669"/>
    <property type="project" value="Ensembl"/>
</dbReference>
<dbReference type="GO" id="GO:0050769">
    <property type="term" value="P:positive regulation of neurogenesis"/>
    <property type="evidence" value="ECO:0007669"/>
    <property type="project" value="Ensembl"/>
</dbReference>
<dbReference type="GO" id="GO:0045944">
    <property type="term" value="P:positive regulation of transcription by RNA polymerase II"/>
    <property type="evidence" value="ECO:0007669"/>
    <property type="project" value="Ensembl"/>
</dbReference>
<dbReference type="CDD" id="cd19345">
    <property type="entry name" value="Wnt_Wnt2"/>
    <property type="match status" value="1"/>
</dbReference>
<dbReference type="FunFam" id="3.30.2460.20:FF:000001">
    <property type="entry name" value="Wnt homolog"/>
    <property type="match status" value="1"/>
</dbReference>
<dbReference type="Gene3D" id="3.30.2460.20">
    <property type="match status" value="1"/>
</dbReference>
<dbReference type="InterPro" id="IPR005817">
    <property type="entry name" value="Wnt"/>
</dbReference>
<dbReference type="InterPro" id="IPR009140">
    <property type="entry name" value="Wnt2"/>
</dbReference>
<dbReference type="InterPro" id="IPR043158">
    <property type="entry name" value="Wnt_C"/>
</dbReference>
<dbReference type="InterPro" id="IPR018161">
    <property type="entry name" value="Wnt_CS"/>
</dbReference>
<dbReference type="PANTHER" id="PTHR12027:SF86">
    <property type="entry name" value="PROTEIN WNT-2"/>
    <property type="match status" value="1"/>
</dbReference>
<dbReference type="PANTHER" id="PTHR12027">
    <property type="entry name" value="WNT RELATED"/>
    <property type="match status" value="1"/>
</dbReference>
<dbReference type="Pfam" id="PF00110">
    <property type="entry name" value="wnt"/>
    <property type="match status" value="1"/>
</dbReference>
<dbReference type="PRINTS" id="PR01842">
    <property type="entry name" value="WNT2PROTEIN"/>
</dbReference>
<dbReference type="PRINTS" id="PR01349">
    <property type="entry name" value="WNTPROTEIN"/>
</dbReference>
<dbReference type="SMART" id="SM00097">
    <property type="entry name" value="WNT1"/>
    <property type="match status" value="1"/>
</dbReference>
<dbReference type="PROSITE" id="PS00246">
    <property type="entry name" value="WNT1"/>
    <property type="match status" value="1"/>
</dbReference>
<name>WNT2_LOXAF</name>
<comment type="function">
    <text evidence="1 2">Ligand for members of the frizzled family of seven transmembrane receptors. Functions in the canonical Wnt signaling pathway that results in activation of transcription factors of the TCF/LEF family (By similarity). Functions as a upstream regulator of FGF10 expression. Plays an important role in embryonic lung development. May contribute to embryonic brain development by regulating the proliferation of dopaminergic precursors and neurons (By similarity).</text>
</comment>
<comment type="subcellular location">
    <subcellularLocation>
        <location evidence="1">Secreted</location>
        <location evidence="1">Extracellular space</location>
        <location evidence="1">Extracellular matrix</location>
    </subcellularLocation>
    <subcellularLocation>
        <location evidence="1">Secreted</location>
    </subcellularLocation>
</comment>
<comment type="PTM">
    <text evidence="1">Palmitoleoylation is required for efficient binding to frizzled receptors. Depalmitoleoylation leads to Wnt signaling pathway inhibition.</text>
</comment>
<comment type="similarity">
    <text evidence="6">Belongs to the Wnt family.</text>
</comment>
<gene>
    <name type="primary">WNT2</name>
</gene>
<evidence type="ECO:0000250" key="1">
    <source>
        <dbReference type="UniProtKB" id="P09544"/>
    </source>
</evidence>
<evidence type="ECO:0000250" key="2">
    <source>
        <dbReference type="UniProtKB" id="P21552"/>
    </source>
</evidence>
<evidence type="ECO:0000250" key="3">
    <source>
        <dbReference type="UniProtKB" id="P28026"/>
    </source>
</evidence>
<evidence type="ECO:0000250" key="4">
    <source>
        <dbReference type="UniProtKB" id="P56704"/>
    </source>
</evidence>
<evidence type="ECO:0000255" key="5"/>
<evidence type="ECO:0000305" key="6"/>
<protein>
    <recommendedName>
        <fullName>Protein Wnt-2</fullName>
    </recommendedName>
</protein>
<organism>
    <name type="scientific">Loxodonta africana</name>
    <name type="common">African elephant</name>
    <dbReference type="NCBI Taxonomy" id="9785"/>
    <lineage>
        <taxon>Eukaryota</taxon>
        <taxon>Metazoa</taxon>
        <taxon>Chordata</taxon>
        <taxon>Craniata</taxon>
        <taxon>Vertebrata</taxon>
        <taxon>Euteleostomi</taxon>
        <taxon>Mammalia</taxon>
        <taxon>Eutheria</taxon>
        <taxon>Afrotheria</taxon>
        <taxon>Proboscidea</taxon>
        <taxon>Elephantidae</taxon>
        <taxon>Loxodonta</taxon>
    </lineage>
</organism>
<accession>Q108U2</accession>
<keyword id="KW-0217">Developmental protein</keyword>
<keyword id="KW-1015">Disulfide bond</keyword>
<keyword id="KW-0272">Extracellular matrix</keyword>
<keyword id="KW-0325">Glycoprotein</keyword>
<keyword id="KW-0449">Lipoprotein</keyword>
<keyword id="KW-1185">Reference proteome</keyword>
<keyword id="KW-0964">Secreted</keyword>
<keyword id="KW-0732">Signal</keyword>
<keyword id="KW-0879">Wnt signaling pathway</keyword>
<reference key="1">
    <citation type="submission" date="2006-07" db="EMBL/GenBank/DDBJ databases">
        <title>NISC comparative sequencing initiative.</title>
        <authorList>
            <person name="Antonellis A."/>
            <person name="Ayele K."/>
            <person name="Benjamin B."/>
            <person name="Blakesley R.W."/>
            <person name="Boakye A."/>
            <person name="Bouffard G.G."/>
            <person name="Brinkley C."/>
            <person name="Brooks S."/>
            <person name="Chu G."/>
            <person name="Coleman H."/>
            <person name="Engle J."/>
            <person name="Gestole M."/>
            <person name="Greene A."/>
            <person name="Guan X."/>
            <person name="Gupta J."/>
            <person name="Haghighi P."/>
            <person name="Han J."/>
            <person name="Hansen N."/>
            <person name="Ho S.-L."/>
            <person name="Hu P."/>
            <person name="Hunter G."/>
            <person name="Hurle B."/>
            <person name="Idol J.R."/>
            <person name="Kwong P."/>
            <person name="Laric P."/>
            <person name="Larson S."/>
            <person name="Lee-Lin S.-Q."/>
            <person name="Legaspi R."/>
            <person name="Madden M."/>
            <person name="Maduro Q.L."/>
            <person name="Maduro V.B."/>
            <person name="Margulies E.H."/>
            <person name="Masiello C."/>
            <person name="Maskeri B."/>
            <person name="McDowell J."/>
            <person name="Mojidi H.A."/>
            <person name="Mullikin J.C."/>
            <person name="Oestreicher J.S."/>
            <person name="Park M."/>
            <person name="Portnoy M.E."/>
            <person name="Prasad A."/>
            <person name="Puri O."/>
            <person name="Reddix-Dugue N."/>
            <person name="Schandler K."/>
            <person name="Schueler M.G."/>
            <person name="Sison C."/>
            <person name="Stantripop S."/>
            <person name="Stephen E."/>
            <person name="Taye A."/>
            <person name="Thomas J.W."/>
            <person name="Thomas P.J."/>
            <person name="Tsipouri V."/>
            <person name="Ung L."/>
            <person name="Vogt J.L."/>
            <person name="Wetherby K.D."/>
            <person name="Young A."/>
            <person name="Green E.D."/>
        </authorList>
    </citation>
    <scope>NUCLEOTIDE SEQUENCE [LARGE SCALE GENOMIC DNA]</scope>
</reference>